<proteinExistence type="evidence at transcript level"/>
<evidence type="ECO:0000250" key="1"/>
<evidence type="ECO:0000255" key="2">
    <source>
        <dbReference type="PROSITE-ProRule" id="PRU01210"/>
    </source>
</evidence>
<evidence type="ECO:0000305" key="3"/>
<accession>Q1I176</accession>
<reference key="1">
    <citation type="journal article" date="2006" name="Comp. Biochem. Physiol.">
        <title>Diversity of long-chain toxins in Tityus zulianus and Tityus discrepans venoms (Scorpiones, Buthidae): molecular, immunological, and mass spectral analyses.</title>
        <authorList>
            <person name="Borges A."/>
            <person name="Garcia C.C."/>
            <person name="Lugo E."/>
            <person name="Alfonzo M.J."/>
            <person name="Jowers M.J."/>
            <person name="Op den Camp H.J.M."/>
        </authorList>
    </citation>
    <scope>NUCLEOTIDE SEQUENCE [MRNA]</scope>
    <source>
        <tissue>Venom gland</tissue>
    </source>
</reference>
<reference key="2">
    <citation type="journal article" date="2012" name="PLoS ONE">
        <title>Identification and phylogenetic analysis of Tityus pachyurus and Tityus obscurus novel putative Na+-channel scorpion toxins.</title>
        <authorList>
            <person name="Guerrero-Vargas J.A."/>
            <person name="Mourao C.B."/>
            <person name="Quintero-Hernandez V."/>
            <person name="Possani L.D."/>
            <person name="Schwartz E.F."/>
        </authorList>
    </citation>
    <scope>NOMENCLATURE</scope>
</reference>
<organism>
    <name type="scientific">Tityus discrepans</name>
    <name type="common">Venezuelan scorpion</name>
    <dbReference type="NCBI Taxonomy" id="57059"/>
    <lineage>
        <taxon>Eukaryota</taxon>
        <taxon>Metazoa</taxon>
        <taxon>Ecdysozoa</taxon>
        <taxon>Arthropoda</taxon>
        <taxon>Chelicerata</taxon>
        <taxon>Arachnida</taxon>
        <taxon>Scorpiones</taxon>
        <taxon>Buthida</taxon>
        <taxon>Buthoidea</taxon>
        <taxon>Buthidae</taxon>
        <taxon>Tityus</taxon>
    </lineage>
</organism>
<name>SCX10_TITDI</name>
<protein>
    <recommendedName>
        <fullName>Toxin Td10</fullName>
    </recommendedName>
    <alternativeName>
        <fullName>T-beta* NaTx13.5</fullName>
    </alternativeName>
</protein>
<keyword id="KW-0027">Amidation</keyword>
<keyword id="KW-1015">Disulfide bond</keyword>
<keyword id="KW-0872">Ion channel impairing toxin</keyword>
<keyword id="KW-0528">Neurotoxin</keyword>
<keyword id="KW-0964">Secreted</keyword>
<keyword id="KW-0732">Signal</keyword>
<keyword id="KW-0800">Toxin</keyword>
<keyword id="KW-0738">Voltage-gated sodium channel impairing toxin</keyword>
<dbReference type="EMBL" id="DQ075230">
    <property type="protein sequence ID" value="AAZ29709.1"/>
    <property type="molecule type" value="mRNA"/>
</dbReference>
<dbReference type="SMR" id="Q1I176"/>
<dbReference type="GO" id="GO:0005576">
    <property type="term" value="C:extracellular region"/>
    <property type="evidence" value="ECO:0007669"/>
    <property type="project" value="UniProtKB-SubCell"/>
</dbReference>
<dbReference type="GO" id="GO:0019871">
    <property type="term" value="F:sodium channel inhibitor activity"/>
    <property type="evidence" value="ECO:0007669"/>
    <property type="project" value="InterPro"/>
</dbReference>
<dbReference type="GO" id="GO:0090729">
    <property type="term" value="F:toxin activity"/>
    <property type="evidence" value="ECO:0007669"/>
    <property type="project" value="UniProtKB-KW"/>
</dbReference>
<dbReference type="CDD" id="cd23106">
    <property type="entry name" value="neurotoxins_LC_scorpion"/>
    <property type="match status" value="1"/>
</dbReference>
<dbReference type="FunFam" id="3.30.30.10:FF:000002">
    <property type="entry name" value="Alpha-like toxin BmK-M1"/>
    <property type="match status" value="1"/>
</dbReference>
<dbReference type="Gene3D" id="3.30.30.10">
    <property type="entry name" value="Knottin, scorpion toxin-like"/>
    <property type="match status" value="1"/>
</dbReference>
<dbReference type="InterPro" id="IPR044062">
    <property type="entry name" value="LCN-type_CS_alpha_beta_dom"/>
</dbReference>
<dbReference type="InterPro" id="IPR036574">
    <property type="entry name" value="Scorpion_toxin-like_sf"/>
</dbReference>
<dbReference type="InterPro" id="IPR018218">
    <property type="entry name" value="Scorpion_toxinL"/>
</dbReference>
<dbReference type="InterPro" id="IPR002061">
    <property type="entry name" value="Scorpion_toxinL/defensin"/>
</dbReference>
<dbReference type="Pfam" id="PF00537">
    <property type="entry name" value="Toxin_3"/>
    <property type="match status" value="1"/>
</dbReference>
<dbReference type="PRINTS" id="PR00285">
    <property type="entry name" value="SCORPNTOXIN"/>
</dbReference>
<dbReference type="SUPFAM" id="SSF57095">
    <property type="entry name" value="Scorpion toxin-like"/>
    <property type="match status" value="1"/>
</dbReference>
<dbReference type="PROSITE" id="PS51863">
    <property type="entry name" value="LCN_CSAB"/>
    <property type="match status" value="1"/>
</dbReference>
<sequence length="73" mass="8238">IGMVVECKDGYLMGPDGCKRGCLTRPARYCPNECSRLKGKDGYCYLWLACYCYNMPESAPVWERATNRCGKGK</sequence>
<comment type="function">
    <text evidence="1">Beta toxins bind voltage-independently at site-4 of sodium channels (Nav) and shift the voltage of activation toward more negative potentials thereby affecting sodium channel activation and promoting spontaneous and repetitive firing.</text>
</comment>
<comment type="subcellular location">
    <subcellularLocation>
        <location>Secreted</location>
    </subcellularLocation>
</comment>
<comment type="tissue specificity">
    <text>Expressed by the venom gland.</text>
</comment>
<comment type="domain">
    <text evidence="3">Has the structural arrangement of an alpha-helix connected to antiparallel beta-sheets by disulfide bonds (CS-alpha/beta).</text>
</comment>
<comment type="miscellaneous">
    <text evidence="1">Negative results: does not affect the cardiac Nav1.5/SCN5A, the peripheral nerve channel Nav1.7/SCN9A, and the voltage-gated potassium channel Kv1.5/KCNA5.</text>
</comment>
<comment type="similarity">
    <text evidence="3">Belongs to the long (4 C-C) scorpion toxin superfamily. Sodium channel inhibitor family. Beta subfamily.</text>
</comment>
<feature type="signal peptide" evidence="1">
    <location>
        <begin position="1" status="less than"/>
        <end position="7"/>
    </location>
</feature>
<feature type="chain" id="PRO_0000253773" description="Toxin Td10">
    <location>
        <begin position="8"/>
        <end position="71"/>
    </location>
</feature>
<feature type="domain" description="LCN-type CS-alpha/beta" evidence="2">
    <location>
        <begin position="8"/>
        <end position="70"/>
    </location>
</feature>
<feature type="modified residue" description="Lysine amide" evidence="1">
    <location>
        <position position="71"/>
    </location>
</feature>
<feature type="disulfide bond" evidence="2">
    <location>
        <begin position="18"/>
        <end position="69"/>
    </location>
</feature>
<feature type="disulfide bond" evidence="2">
    <location>
        <begin position="22"/>
        <end position="44"/>
    </location>
</feature>
<feature type="disulfide bond" evidence="2">
    <location>
        <begin position="30"/>
        <end position="50"/>
    </location>
</feature>
<feature type="disulfide bond" evidence="2">
    <location>
        <begin position="34"/>
        <end position="52"/>
    </location>
</feature>
<feature type="non-terminal residue">
    <location>
        <position position="1"/>
    </location>
</feature>